<dbReference type="EC" id="2.1.1.199" evidence="1"/>
<dbReference type="EMBL" id="CP000702">
    <property type="protein sequence ID" value="ABQ46084.1"/>
    <property type="molecule type" value="Genomic_DNA"/>
</dbReference>
<dbReference type="RefSeq" id="WP_011942758.1">
    <property type="nucleotide sequence ID" value="NC_009486.1"/>
</dbReference>
<dbReference type="SMR" id="A5IIR1"/>
<dbReference type="STRING" id="390874.Tpet_0055"/>
<dbReference type="KEGG" id="tpt:Tpet_0055"/>
<dbReference type="eggNOG" id="COG0275">
    <property type="taxonomic scope" value="Bacteria"/>
</dbReference>
<dbReference type="HOGENOM" id="CLU_038422_3_0_0"/>
<dbReference type="Proteomes" id="UP000006558">
    <property type="component" value="Chromosome"/>
</dbReference>
<dbReference type="GO" id="GO:0005737">
    <property type="term" value="C:cytoplasm"/>
    <property type="evidence" value="ECO:0007669"/>
    <property type="project" value="UniProtKB-SubCell"/>
</dbReference>
<dbReference type="GO" id="GO:0071424">
    <property type="term" value="F:rRNA (cytosine-N4-)-methyltransferase activity"/>
    <property type="evidence" value="ECO:0007669"/>
    <property type="project" value="UniProtKB-UniRule"/>
</dbReference>
<dbReference type="GO" id="GO:0070475">
    <property type="term" value="P:rRNA base methylation"/>
    <property type="evidence" value="ECO:0007669"/>
    <property type="project" value="UniProtKB-UniRule"/>
</dbReference>
<dbReference type="CDD" id="cd02440">
    <property type="entry name" value="AdoMet_MTases"/>
    <property type="match status" value="1"/>
</dbReference>
<dbReference type="Gene3D" id="1.10.150.170">
    <property type="entry name" value="Putative methyltransferase TM0872, insert domain"/>
    <property type="match status" value="1"/>
</dbReference>
<dbReference type="Gene3D" id="3.40.50.150">
    <property type="entry name" value="Vaccinia Virus protein VP39"/>
    <property type="match status" value="1"/>
</dbReference>
<dbReference type="HAMAP" id="MF_01007">
    <property type="entry name" value="16SrRNA_methyltr_H"/>
    <property type="match status" value="1"/>
</dbReference>
<dbReference type="InterPro" id="IPR002903">
    <property type="entry name" value="RsmH"/>
</dbReference>
<dbReference type="InterPro" id="IPR023397">
    <property type="entry name" value="SAM-dep_MeTrfase_MraW_recog"/>
</dbReference>
<dbReference type="InterPro" id="IPR029063">
    <property type="entry name" value="SAM-dependent_MTases_sf"/>
</dbReference>
<dbReference type="NCBIfam" id="TIGR00006">
    <property type="entry name" value="16S rRNA (cytosine(1402)-N(4))-methyltransferase RsmH"/>
    <property type="match status" value="1"/>
</dbReference>
<dbReference type="PANTHER" id="PTHR11265:SF0">
    <property type="entry name" value="12S RRNA N4-METHYLCYTIDINE METHYLTRANSFERASE"/>
    <property type="match status" value="1"/>
</dbReference>
<dbReference type="PANTHER" id="PTHR11265">
    <property type="entry name" value="S-ADENOSYL-METHYLTRANSFERASE MRAW"/>
    <property type="match status" value="1"/>
</dbReference>
<dbReference type="Pfam" id="PF01795">
    <property type="entry name" value="Methyltransf_5"/>
    <property type="match status" value="1"/>
</dbReference>
<dbReference type="PIRSF" id="PIRSF004486">
    <property type="entry name" value="MraW"/>
    <property type="match status" value="1"/>
</dbReference>
<dbReference type="SUPFAM" id="SSF81799">
    <property type="entry name" value="Putative methyltransferase TM0872, insert domain"/>
    <property type="match status" value="1"/>
</dbReference>
<dbReference type="SUPFAM" id="SSF53335">
    <property type="entry name" value="S-adenosyl-L-methionine-dependent methyltransferases"/>
    <property type="match status" value="1"/>
</dbReference>
<accession>A5IIR1</accession>
<comment type="function">
    <text evidence="1">Specifically methylates the N4 position of cytidine in position 1402 (C1402) of 16S rRNA.</text>
</comment>
<comment type="catalytic activity">
    <reaction evidence="1">
        <text>cytidine(1402) in 16S rRNA + S-adenosyl-L-methionine = N(4)-methylcytidine(1402) in 16S rRNA + S-adenosyl-L-homocysteine + H(+)</text>
        <dbReference type="Rhea" id="RHEA:42928"/>
        <dbReference type="Rhea" id="RHEA-COMP:10286"/>
        <dbReference type="Rhea" id="RHEA-COMP:10287"/>
        <dbReference type="ChEBI" id="CHEBI:15378"/>
        <dbReference type="ChEBI" id="CHEBI:57856"/>
        <dbReference type="ChEBI" id="CHEBI:59789"/>
        <dbReference type="ChEBI" id="CHEBI:74506"/>
        <dbReference type="ChEBI" id="CHEBI:82748"/>
        <dbReference type="EC" id="2.1.1.199"/>
    </reaction>
</comment>
<comment type="subcellular location">
    <subcellularLocation>
        <location evidence="1">Cytoplasm</location>
    </subcellularLocation>
</comment>
<comment type="similarity">
    <text evidence="1">Belongs to the methyltransferase superfamily. RsmH family.</text>
</comment>
<reference key="1">
    <citation type="submission" date="2007-05" db="EMBL/GenBank/DDBJ databases">
        <title>Complete sequence of Thermotoga petrophila RKU-1.</title>
        <authorList>
            <consortium name="US DOE Joint Genome Institute"/>
            <person name="Copeland A."/>
            <person name="Lucas S."/>
            <person name="Lapidus A."/>
            <person name="Barry K."/>
            <person name="Glavina del Rio T."/>
            <person name="Dalin E."/>
            <person name="Tice H."/>
            <person name="Pitluck S."/>
            <person name="Sims D."/>
            <person name="Brettin T."/>
            <person name="Bruce D."/>
            <person name="Detter J.C."/>
            <person name="Han C."/>
            <person name="Tapia R."/>
            <person name="Schmutz J."/>
            <person name="Larimer F."/>
            <person name="Land M."/>
            <person name="Hauser L."/>
            <person name="Kyrpides N."/>
            <person name="Mikhailova N."/>
            <person name="Nelson K."/>
            <person name="Gogarten J.P."/>
            <person name="Noll K."/>
            <person name="Richardson P."/>
        </authorList>
    </citation>
    <scope>NUCLEOTIDE SEQUENCE [LARGE SCALE GENOMIC DNA]</scope>
    <source>
        <strain>ATCC BAA-488 / DSM 13995 / JCM 10881 / RKU-1</strain>
    </source>
</reference>
<gene>
    <name evidence="1" type="primary">rsmH</name>
    <name type="synonym">mraW</name>
    <name type="ordered locus">Tpet_0055</name>
</gene>
<keyword id="KW-0963">Cytoplasm</keyword>
<keyword id="KW-0489">Methyltransferase</keyword>
<keyword id="KW-0698">rRNA processing</keyword>
<keyword id="KW-0949">S-adenosyl-L-methionine</keyword>
<keyword id="KW-0808">Transferase</keyword>
<proteinExistence type="inferred from homology"/>
<evidence type="ECO:0000255" key="1">
    <source>
        <dbReference type="HAMAP-Rule" id="MF_01007"/>
    </source>
</evidence>
<evidence type="ECO:0000256" key="2">
    <source>
        <dbReference type="SAM" id="MobiDB-lite"/>
    </source>
</evidence>
<protein>
    <recommendedName>
        <fullName evidence="1">Ribosomal RNA small subunit methyltransferase H</fullName>
        <ecNumber evidence="1">2.1.1.199</ecNumber>
    </recommendedName>
    <alternativeName>
        <fullName evidence="1">16S rRNA m(4)C1402 methyltransferase</fullName>
    </alternativeName>
    <alternativeName>
        <fullName evidence="1">rRNA (cytosine-N(4)-)-methyltransferase RsmH</fullName>
    </alternativeName>
</protein>
<feature type="chain" id="PRO_0000387195" description="Ribosomal RNA small subunit methyltransferase H">
    <location>
        <begin position="1"/>
        <end position="299"/>
    </location>
</feature>
<feature type="region of interest" description="Disordered" evidence="2">
    <location>
        <begin position="268"/>
        <end position="299"/>
    </location>
</feature>
<feature type="compositionally biased region" description="Basic and acidic residues" evidence="2">
    <location>
        <begin position="268"/>
        <end position="282"/>
    </location>
</feature>
<feature type="compositionally biased region" description="Basic and acidic residues" evidence="2">
    <location>
        <begin position="289"/>
        <end position="299"/>
    </location>
</feature>
<feature type="binding site" evidence="1">
    <location>
        <begin position="36"/>
        <end position="38"/>
    </location>
    <ligand>
        <name>S-adenosyl-L-methionine</name>
        <dbReference type="ChEBI" id="CHEBI:59789"/>
    </ligand>
</feature>
<feature type="binding site" evidence="1">
    <location>
        <position position="55"/>
    </location>
    <ligand>
        <name>S-adenosyl-L-methionine</name>
        <dbReference type="ChEBI" id="CHEBI:59789"/>
    </ligand>
</feature>
<feature type="binding site" evidence="1">
    <location>
        <position position="103"/>
    </location>
    <ligand>
        <name>S-adenosyl-L-methionine</name>
        <dbReference type="ChEBI" id="CHEBI:59789"/>
    </ligand>
</feature>
<feature type="binding site" evidence="1">
    <location>
        <position position="110"/>
    </location>
    <ligand>
        <name>S-adenosyl-L-methionine</name>
        <dbReference type="ChEBI" id="CHEBI:59789"/>
    </ligand>
</feature>
<sequence length="299" mass="34836">MRKYSQRHIPVMVREVIEFLKPEDEKIILDCTVGEGGHSKAILEHCPGCRIIGIDVDSEVLRIAEEKLKEFSDRASLFKISYREADFLLKTLGVEKVDGILMDLGVSTYQLKGENRGFTFEREEPLDMRMDLESEVTAQKVLNELPEEELARIIFEYGEEKKFARRIARKIVENRPLNTTLDLVKAVREALPSYEIRRRKRHFATKTFQAIRIYVNRELENLKEFLRKAEDLLNPGGRIVVISFHSLEDRIVKETFRNSKKLRILTEKPVRPSEEEIRENPRARSGRLRAAERIEKGGD</sequence>
<organism>
    <name type="scientific">Thermotoga petrophila (strain ATCC BAA-488 / DSM 13995 / JCM 10881 / RKU-1)</name>
    <dbReference type="NCBI Taxonomy" id="390874"/>
    <lineage>
        <taxon>Bacteria</taxon>
        <taxon>Thermotogati</taxon>
        <taxon>Thermotogota</taxon>
        <taxon>Thermotogae</taxon>
        <taxon>Thermotogales</taxon>
        <taxon>Thermotogaceae</taxon>
        <taxon>Thermotoga</taxon>
    </lineage>
</organism>
<name>RSMH_THEP1</name>